<evidence type="ECO:0000250" key="1">
    <source>
        <dbReference type="UniProtKB" id="P24058"/>
    </source>
</evidence>
<evidence type="ECO:0000305" key="2"/>
<sequence length="466" mass="51044">MASEGDKLWGGRFSGSTDPIMEMLNSSIACDQRLSEVDIQGSMAYAKALEKAGILTKTELEKILSGLEKISEEWSKGVFVVKQSDEDIHTANERRLKELIGDIAGKLHTGRSRNDQVVTDLKLLLKSSISVISTHLLQLIKTLVERAATEIDVIMPGYTHLQKALPIRWSQFLLSHAVALIRDSERLGEVKKRMSVLPLGSGALAGNPLEIDRELLRSELDFASISLNSMDAISERDFVVELLSVATLLMIHLSKLAEDLIIFSTTEFGFVTLSDAYSTGSSLLPQKKNPDSLELIRSKAGRVFGRLAAVLMVLKGLPSTYNKDLQEDKEAVFDVVDTLTAVLQVATGVISTLQVNKENMEKALTPELLSTDLALYLVRKGMPFRQAHVASGKAVHLAETKGIAINKLTLEDLKSISPLFASDVSQVFNIVNSVEQYTAVGGTAKSSVTAQIEQLRELLKKQKEQA</sequence>
<dbReference type="EC" id="4.3.2.1"/>
<dbReference type="EMBL" id="M10806">
    <property type="protein sequence ID" value="AAA48727.1"/>
    <property type="molecule type" value="Genomic_DNA"/>
</dbReference>
<dbReference type="EMBL" id="X02188">
    <property type="protein sequence ID" value="CAA26129.1"/>
    <property type="molecule type" value="Genomic_DNA"/>
</dbReference>
<dbReference type="PIR" id="A25622">
    <property type="entry name" value="CYCHD2"/>
</dbReference>
<dbReference type="RefSeq" id="NP_001025885.1">
    <property type="nucleotide sequence ID" value="NM_001030714.1"/>
</dbReference>
<dbReference type="SMR" id="P05083"/>
<dbReference type="FunCoup" id="P05083">
    <property type="interactions" value="1490"/>
</dbReference>
<dbReference type="STRING" id="9031.ENSGALP00000058708"/>
<dbReference type="PaxDb" id="9031-ENSGALP00000004034"/>
<dbReference type="GeneID" id="417545"/>
<dbReference type="KEGG" id="gga:417545"/>
<dbReference type="CTD" id="435"/>
<dbReference type="VEuPathDB" id="HostDB:geneid_417545"/>
<dbReference type="eggNOG" id="KOG1316">
    <property type="taxonomic scope" value="Eukaryota"/>
</dbReference>
<dbReference type="InParanoid" id="P05083"/>
<dbReference type="OMA" id="DFAIEFC"/>
<dbReference type="OrthoDB" id="2561043at2759"/>
<dbReference type="PhylomeDB" id="P05083"/>
<dbReference type="Reactome" id="R-GGA-187630">
    <property type="pathway name" value="Arginine metabolism"/>
</dbReference>
<dbReference type="Reactome" id="R-GGA-70635">
    <property type="pathway name" value="Urea cycle"/>
</dbReference>
<dbReference type="UniPathway" id="UPA00068">
    <property type="reaction ID" value="UER00114"/>
</dbReference>
<dbReference type="PRO" id="PR:P05083"/>
<dbReference type="Proteomes" id="UP000000539">
    <property type="component" value="Chromosome 19"/>
</dbReference>
<dbReference type="Bgee" id="ENSGALG00000002576">
    <property type="expression patterns" value="Expressed in ovary and 12 other cell types or tissues"/>
</dbReference>
<dbReference type="GO" id="GO:0005829">
    <property type="term" value="C:cytosol"/>
    <property type="evidence" value="ECO:0000318"/>
    <property type="project" value="GO_Central"/>
</dbReference>
<dbReference type="GO" id="GO:0004056">
    <property type="term" value="F:argininosuccinate lyase activity"/>
    <property type="evidence" value="ECO:0000318"/>
    <property type="project" value="GO_Central"/>
</dbReference>
<dbReference type="GO" id="GO:0005212">
    <property type="term" value="F:structural constituent of eye lens"/>
    <property type="evidence" value="ECO:0007669"/>
    <property type="project" value="UniProtKB-KW"/>
</dbReference>
<dbReference type="GO" id="GO:0042450">
    <property type="term" value="P:arginine biosynthetic process via ornithine"/>
    <property type="evidence" value="ECO:0000318"/>
    <property type="project" value="GO_Central"/>
</dbReference>
<dbReference type="GO" id="GO:0006525">
    <property type="term" value="P:arginine metabolic process"/>
    <property type="evidence" value="ECO:0000304"/>
    <property type="project" value="Reactome"/>
</dbReference>
<dbReference type="GO" id="GO:0006526">
    <property type="term" value="P:L-arginine biosynthetic process"/>
    <property type="evidence" value="ECO:0007669"/>
    <property type="project" value="UniProtKB-UniPathway"/>
</dbReference>
<dbReference type="CDD" id="cd01359">
    <property type="entry name" value="Argininosuccinate_lyase"/>
    <property type="match status" value="1"/>
</dbReference>
<dbReference type="FunFam" id="1.10.275.10:FF:000002">
    <property type="entry name" value="Argininosuccinate lyase"/>
    <property type="match status" value="1"/>
</dbReference>
<dbReference type="FunFam" id="1.10.40.30:FF:000001">
    <property type="entry name" value="Argininosuccinate lyase"/>
    <property type="match status" value="1"/>
</dbReference>
<dbReference type="FunFam" id="1.20.200.10:FF:000002">
    <property type="entry name" value="Argininosuccinate lyase"/>
    <property type="match status" value="1"/>
</dbReference>
<dbReference type="Gene3D" id="1.10.40.30">
    <property type="entry name" value="Fumarase/aspartase (C-terminal domain)"/>
    <property type="match status" value="1"/>
</dbReference>
<dbReference type="Gene3D" id="1.20.200.10">
    <property type="entry name" value="Fumarase/aspartase (Central domain)"/>
    <property type="match status" value="1"/>
</dbReference>
<dbReference type="Gene3D" id="1.10.275.10">
    <property type="entry name" value="Fumarase/aspartase (N-terminal domain)"/>
    <property type="match status" value="1"/>
</dbReference>
<dbReference type="HAMAP" id="MF_00006">
    <property type="entry name" value="Arg_succ_lyase"/>
    <property type="match status" value="1"/>
</dbReference>
<dbReference type="InterPro" id="IPR029419">
    <property type="entry name" value="Arg_succ_lyase_C"/>
</dbReference>
<dbReference type="InterPro" id="IPR009049">
    <property type="entry name" value="Argininosuccinate_lyase"/>
</dbReference>
<dbReference type="InterPro" id="IPR024083">
    <property type="entry name" value="Fumarase/histidase_N"/>
</dbReference>
<dbReference type="InterPro" id="IPR000362">
    <property type="entry name" value="Fumarate_lyase_fam"/>
</dbReference>
<dbReference type="InterPro" id="IPR022761">
    <property type="entry name" value="Fumarate_lyase_N"/>
</dbReference>
<dbReference type="InterPro" id="IPR008948">
    <property type="entry name" value="L-Aspartase-like"/>
</dbReference>
<dbReference type="NCBIfam" id="TIGR00838">
    <property type="entry name" value="argH"/>
    <property type="match status" value="1"/>
</dbReference>
<dbReference type="PANTHER" id="PTHR43814">
    <property type="entry name" value="ARGININOSUCCINATE LYASE"/>
    <property type="match status" value="1"/>
</dbReference>
<dbReference type="PANTHER" id="PTHR43814:SF1">
    <property type="entry name" value="ARGININOSUCCINATE LYASE"/>
    <property type="match status" value="1"/>
</dbReference>
<dbReference type="Pfam" id="PF14698">
    <property type="entry name" value="ASL_C2"/>
    <property type="match status" value="1"/>
</dbReference>
<dbReference type="Pfam" id="PF00206">
    <property type="entry name" value="Lyase_1"/>
    <property type="match status" value="1"/>
</dbReference>
<dbReference type="PRINTS" id="PR00145">
    <property type="entry name" value="ARGSUCLYASE"/>
</dbReference>
<dbReference type="PRINTS" id="PR00149">
    <property type="entry name" value="FUMRATELYASE"/>
</dbReference>
<dbReference type="SUPFAM" id="SSF48557">
    <property type="entry name" value="L-aspartase-like"/>
    <property type="match status" value="1"/>
</dbReference>
<organism>
    <name type="scientific">Gallus gallus</name>
    <name type="common">Chicken</name>
    <dbReference type="NCBI Taxonomy" id="9031"/>
    <lineage>
        <taxon>Eukaryota</taxon>
        <taxon>Metazoa</taxon>
        <taxon>Chordata</taxon>
        <taxon>Craniata</taxon>
        <taxon>Vertebrata</taxon>
        <taxon>Euteleostomi</taxon>
        <taxon>Archelosauria</taxon>
        <taxon>Archosauria</taxon>
        <taxon>Dinosauria</taxon>
        <taxon>Saurischia</taxon>
        <taxon>Theropoda</taxon>
        <taxon>Coelurosauria</taxon>
        <taxon>Aves</taxon>
        <taxon>Neognathae</taxon>
        <taxon>Galloanserae</taxon>
        <taxon>Galliformes</taxon>
        <taxon>Phasianidae</taxon>
        <taxon>Phasianinae</taxon>
        <taxon>Gallus</taxon>
    </lineage>
</organism>
<name>ARLY2_CHICK</name>
<keyword id="KW-0028">Amino-acid biosynthesis</keyword>
<keyword id="KW-0055">Arginine biosynthesis</keyword>
<keyword id="KW-0273">Eye lens protein</keyword>
<keyword id="KW-0456">Lyase</keyword>
<keyword id="KW-1185">Reference proteome</keyword>
<comment type="function">
    <text>Delta crystallin, the principal crystallin in embryonic lens, is found only in birds and reptiles. This protein may also function as an enzymatically active argininosuccinate lyase.</text>
</comment>
<comment type="catalytic activity">
    <reaction>
        <text>2-(N(omega)-L-arginino)succinate = fumarate + L-arginine</text>
        <dbReference type="Rhea" id="RHEA:24020"/>
        <dbReference type="ChEBI" id="CHEBI:29806"/>
        <dbReference type="ChEBI" id="CHEBI:32682"/>
        <dbReference type="ChEBI" id="CHEBI:57472"/>
        <dbReference type="EC" id="4.3.2.1"/>
    </reaction>
</comment>
<comment type="pathway">
    <text>Amino-acid biosynthesis; L-arginine biosynthesis; L-arginine from L-ornithine and carbamoyl phosphate: step 3/3.</text>
</comment>
<comment type="subunit">
    <text>Homotetramer.</text>
</comment>
<comment type="tissue specificity">
    <text>Eye lens.</text>
</comment>
<comment type="miscellaneous">
    <text>It is uncertain if this gene is expressed.</text>
</comment>
<comment type="similarity">
    <text evidence="2">Belongs to the lyase 1 family. Argininosuccinate lyase subfamily.</text>
</comment>
<gene>
    <name type="primary">ASL2</name>
</gene>
<feature type="chain" id="PRO_0000137720" description="Argininosuccinate lyase">
    <location>
        <begin position="1"/>
        <end position="466"/>
    </location>
</feature>
<feature type="active site" description="Proton acceptor" evidence="1">
    <location>
        <position position="160"/>
    </location>
</feature>
<feature type="active site" description="Proton donor" evidence="1">
    <location>
        <position position="281"/>
    </location>
</feature>
<feature type="binding site" description="in chain A" evidence="1">
    <location>
        <position position="27"/>
    </location>
    <ligand>
        <name>2-(N(omega)-L-arginino)succinate</name>
        <dbReference type="ChEBI" id="CHEBI:57472"/>
        <note>ligand shared between tetrameric partners</note>
    </ligand>
</feature>
<feature type="binding site" description="in chain A" evidence="1">
    <location>
        <position position="114"/>
    </location>
    <ligand>
        <name>2-(N(omega)-L-arginino)succinate</name>
        <dbReference type="ChEBI" id="CHEBI:57472"/>
        <note>ligand shared between tetrameric partners</note>
    </ligand>
</feature>
<feature type="binding site" description="in chain C" evidence="1">
    <location>
        <position position="159"/>
    </location>
    <ligand>
        <name>2-(N(omega)-L-arginino)succinate</name>
        <dbReference type="ChEBI" id="CHEBI:57472"/>
        <note>ligand shared between tetrameric partners</note>
    </ligand>
</feature>
<feature type="binding site" description="in chain B" evidence="1">
    <location>
        <position position="289"/>
    </location>
    <ligand>
        <name>2-(N(omega)-L-arginino)succinate</name>
        <dbReference type="ChEBI" id="CHEBI:57472"/>
        <note>ligand shared between tetrameric partners</note>
    </ligand>
</feature>
<feature type="binding site" description="in chain A" evidence="1">
    <location>
        <position position="321"/>
    </location>
    <ligand>
        <name>2-(N(omega)-L-arginino)succinate</name>
        <dbReference type="ChEBI" id="CHEBI:57472"/>
        <note>ligand shared between tetrameric partners</note>
    </ligand>
</feature>
<feature type="binding site" description="in chain A" evidence="1">
    <location>
        <position position="326"/>
    </location>
    <ligand>
        <name>2-(N(omega)-L-arginino)succinate</name>
        <dbReference type="ChEBI" id="CHEBI:57472"/>
        <note>ligand shared between tetrameric partners</note>
    </ligand>
</feature>
<feature type="binding site" description="in chain A" evidence="1">
    <location>
        <position position="329"/>
    </location>
    <ligand>
        <name>2-(N(omega)-L-arginino)succinate</name>
        <dbReference type="ChEBI" id="CHEBI:57472"/>
        <note>ligand shared between tetrameric partners</note>
    </ligand>
</feature>
<feature type="site" description="Increases basicity of active site His" evidence="1">
    <location>
        <position position="294"/>
    </location>
</feature>
<accession>P05083</accession>
<proteinExistence type="evidence at transcript level"/>
<protein>
    <recommendedName>
        <fullName>Argininosuccinate lyase</fullName>
        <shortName>ASAL</shortName>
        <ecNumber>4.3.2.1</ecNumber>
    </recommendedName>
    <alternativeName>
        <fullName>Arginosuccinase</fullName>
    </alternativeName>
    <alternativeName>
        <fullName>Delta crystallin II</fullName>
    </alternativeName>
    <alternativeName>
        <fullName>Delta-2 crystallin</fullName>
    </alternativeName>
</protein>
<reference key="1">
    <citation type="journal article" date="1986" name="J. Biol. Chem.">
        <title>Sequence of the chicken delta 2 crystallin gene and its intergenic spacer. Extreme homology with the delta 1 crystallin gene.</title>
        <authorList>
            <person name="Nickerson J.M."/>
            <person name="Wawrousek E.F."/>
            <person name="Borras T."/>
            <person name="Hawkins J.W."/>
            <person name="Norman B.L."/>
            <person name="Filpula D.R."/>
            <person name="Nagle J.W."/>
            <person name="Ally A.H."/>
            <person name="Piatigorsky J."/>
        </authorList>
    </citation>
    <scope>NUCLEOTIDE SEQUENCE [GENOMIC DNA]</scope>
</reference>
<reference key="2">
    <citation type="journal article" date="1985" name="EMBO J.">
        <title>Structural and functional evidence for differential promoter activity of the two linked delta-crystallin genes in the chicken.</title>
        <authorList>
            <person name="Borras T."/>
            <person name="Nickerson J.M."/>
            <person name="Chepelinsky A.B."/>
            <person name="Piatigorsky J."/>
        </authorList>
    </citation>
    <scope>NUCLEOTIDE SEQUENCE [GENOMIC DNA] OF 1-4</scope>
</reference>